<gene>
    <name evidence="1" type="primary">gloB</name>
    <name type="ordered locus">BAbS19_I18160</name>
</gene>
<comment type="function">
    <text evidence="1">Thiolesterase that catalyzes the hydrolysis of S-D-lactoyl-glutathione to form glutathione and D-lactic acid.</text>
</comment>
<comment type="catalytic activity">
    <reaction evidence="1">
        <text>an S-(2-hydroxyacyl)glutathione + H2O = a 2-hydroxy carboxylate + glutathione + H(+)</text>
        <dbReference type="Rhea" id="RHEA:21864"/>
        <dbReference type="ChEBI" id="CHEBI:15377"/>
        <dbReference type="ChEBI" id="CHEBI:15378"/>
        <dbReference type="ChEBI" id="CHEBI:57925"/>
        <dbReference type="ChEBI" id="CHEBI:58896"/>
        <dbReference type="ChEBI" id="CHEBI:71261"/>
        <dbReference type="EC" id="3.1.2.6"/>
    </reaction>
</comment>
<comment type="cofactor">
    <cofactor evidence="1">
        <name>Zn(2+)</name>
        <dbReference type="ChEBI" id="CHEBI:29105"/>
    </cofactor>
    <text evidence="1">Binds 2 Zn(2+) ions per subunit.</text>
</comment>
<comment type="pathway">
    <text evidence="1">Secondary metabolite metabolism; methylglyoxal degradation; (R)-lactate from methylglyoxal: step 2/2.</text>
</comment>
<comment type="subunit">
    <text evidence="1">Monomer.</text>
</comment>
<comment type="similarity">
    <text evidence="1">Belongs to the metallo-beta-lactamase superfamily. Glyoxalase II family.</text>
</comment>
<proteinExistence type="inferred from homology"/>
<name>GLO2_BRUA1</name>
<protein>
    <recommendedName>
        <fullName evidence="1">Hydroxyacylglutathione hydrolase</fullName>
        <ecNumber evidence="1">3.1.2.6</ecNumber>
    </recommendedName>
    <alternativeName>
        <fullName evidence="1">Glyoxalase II</fullName>
        <shortName evidence="1">Glx II</shortName>
    </alternativeName>
</protein>
<organism>
    <name type="scientific">Brucella abortus (strain S19)</name>
    <dbReference type="NCBI Taxonomy" id="430066"/>
    <lineage>
        <taxon>Bacteria</taxon>
        <taxon>Pseudomonadati</taxon>
        <taxon>Pseudomonadota</taxon>
        <taxon>Alphaproteobacteria</taxon>
        <taxon>Hyphomicrobiales</taxon>
        <taxon>Brucellaceae</taxon>
        <taxon>Brucella/Ochrobactrum group</taxon>
        <taxon>Brucella</taxon>
    </lineage>
</organism>
<feature type="chain" id="PRO_1000144752" description="Hydroxyacylglutathione hydrolase">
    <location>
        <begin position="1"/>
        <end position="260"/>
    </location>
</feature>
<feature type="binding site" evidence="1">
    <location>
        <position position="61"/>
    </location>
    <ligand>
        <name>Zn(2+)</name>
        <dbReference type="ChEBI" id="CHEBI:29105"/>
        <label>1</label>
    </ligand>
</feature>
<feature type="binding site" evidence="1">
    <location>
        <position position="63"/>
    </location>
    <ligand>
        <name>Zn(2+)</name>
        <dbReference type="ChEBI" id="CHEBI:29105"/>
        <label>1</label>
    </ligand>
</feature>
<feature type="binding site" evidence="1">
    <location>
        <position position="65"/>
    </location>
    <ligand>
        <name>Zn(2+)</name>
        <dbReference type="ChEBI" id="CHEBI:29105"/>
        <label>2</label>
    </ligand>
</feature>
<feature type="binding site" evidence="1">
    <location>
        <position position="66"/>
    </location>
    <ligand>
        <name>Zn(2+)</name>
        <dbReference type="ChEBI" id="CHEBI:29105"/>
        <label>2</label>
    </ligand>
</feature>
<feature type="binding site" evidence="1">
    <location>
        <position position="119"/>
    </location>
    <ligand>
        <name>Zn(2+)</name>
        <dbReference type="ChEBI" id="CHEBI:29105"/>
        <label>1</label>
    </ligand>
</feature>
<feature type="binding site" evidence="1">
    <location>
        <position position="138"/>
    </location>
    <ligand>
        <name>Zn(2+)</name>
        <dbReference type="ChEBI" id="CHEBI:29105"/>
        <label>1</label>
    </ligand>
</feature>
<feature type="binding site" evidence="1">
    <location>
        <position position="138"/>
    </location>
    <ligand>
        <name>Zn(2+)</name>
        <dbReference type="ChEBI" id="CHEBI:29105"/>
        <label>2</label>
    </ligand>
</feature>
<feature type="binding site" evidence="1">
    <location>
        <position position="176"/>
    </location>
    <ligand>
        <name>Zn(2+)</name>
        <dbReference type="ChEBI" id="CHEBI:29105"/>
        <label>2</label>
    </ligand>
</feature>
<reference key="1">
    <citation type="journal article" date="2008" name="PLoS ONE">
        <title>Genome sequence of Brucella abortus vaccine strain S19 compared to virulent strains yields candidate virulence genes.</title>
        <authorList>
            <person name="Crasta O.R."/>
            <person name="Folkerts O."/>
            <person name="Fei Z."/>
            <person name="Mane S.P."/>
            <person name="Evans C."/>
            <person name="Martino-Catt S."/>
            <person name="Bricker B."/>
            <person name="Yu G."/>
            <person name="Du L."/>
            <person name="Sobral B.W."/>
        </authorList>
    </citation>
    <scope>NUCLEOTIDE SEQUENCE [LARGE SCALE GENOMIC DNA]</scope>
    <source>
        <strain>S19</strain>
    </source>
</reference>
<evidence type="ECO:0000255" key="1">
    <source>
        <dbReference type="HAMAP-Rule" id="MF_01374"/>
    </source>
</evidence>
<accession>B2S889</accession>
<dbReference type="EC" id="3.1.2.6" evidence="1"/>
<dbReference type="EMBL" id="CP000887">
    <property type="protein sequence ID" value="ACD73298.1"/>
    <property type="molecule type" value="Genomic_DNA"/>
</dbReference>
<dbReference type="RefSeq" id="WP_002965004.1">
    <property type="nucleotide sequence ID" value="NC_010742.1"/>
</dbReference>
<dbReference type="SMR" id="B2S889"/>
<dbReference type="GeneID" id="97534780"/>
<dbReference type="KEGG" id="bmc:BAbS19_I18160"/>
<dbReference type="HOGENOM" id="CLU_030571_4_1_5"/>
<dbReference type="UniPathway" id="UPA00619">
    <property type="reaction ID" value="UER00676"/>
</dbReference>
<dbReference type="Proteomes" id="UP000002565">
    <property type="component" value="Chromosome 1"/>
</dbReference>
<dbReference type="GO" id="GO:0004416">
    <property type="term" value="F:hydroxyacylglutathione hydrolase activity"/>
    <property type="evidence" value="ECO:0007669"/>
    <property type="project" value="UniProtKB-UniRule"/>
</dbReference>
<dbReference type="GO" id="GO:0046872">
    <property type="term" value="F:metal ion binding"/>
    <property type="evidence" value="ECO:0007669"/>
    <property type="project" value="UniProtKB-KW"/>
</dbReference>
<dbReference type="GO" id="GO:0019243">
    <property type="term" value="P:methylglyoxal catabolic process to D-lactate via S-lactoyl-glutathione"/>
    <property type="evidence" value="ECO:0007669"/>
    <property type="project" value="InterPro"/>
</dbReference>
<dbReference type="CDD" id="cd07723">
    <property type="entry name" value="hydroxyacylglutathione_hydrolase_MBL-fold"/>
    <property type="match status" value="1"/>
</dbReference>
<dbReference type="Gene3D" id="3.60.15.10">
    <property type="entry name" value="Ribonuclease Z/Hydroxyacylglutathione hydrolase-like"/>
    <property type="match status" value="1"/>
</dbReference>
<dbReference type="HAMAP" id="MF_01374">
    <property type="entry name" value="Glyoxalase_2"/>
    <property type="match status" value="1"/>
</dbReference>
<dbReference type="InterPro" id="IPR035680">
    <property type="entry name" value="Clx_II_MBL"/>
</dbReference>
<dbReference type="InterPro" id="IPR050110">
    <property type="entry name" value="Glyoxalase_II_hydrolase"/>
</dbReference>
<dbReference type="InterPro" id="IPR032282">
    <property type="entry name" value="HAGH_C"/>
</dbReference>
<dbReference type="InterPro" id="IPR017782">
    <property type="entry name" value="Hydroxyacylglutathione_Hdrlase"/>
</dbReference>
<dbReference type="InterPro" id="IPR001279">
    <property type="entry name" value="Metallo-B-lactamas"/>
</dbReference>
<dbReference type="InterPro" id="IPR036866">
    <property type="entry name" value="RibonucZ/Hydroxyglut_hydro"/>
</dbReference>
<dbReference type="NCBIfam" id="TIGR03413">
    <property type="entry name" value="GSH_gloB"/>
    <property type="match status" value="1"/>
</dbReference>
<dbReference type="PANTHER" id="PTHR43705">
    <property type="entry name" value="HYDROXYACYLGLUTATHIONE HYDROLASE"/>
    <property type="match status" value="1"/>
</dbReference>
<dbReference type="PANTHER" id="PTHR43705:SF1">
    <property type="entry name" value="HYDROXYACYLGLUTATHIONE HYDROLASE GLOB"/>
    <property type="match status" value="1"/>
</dbReference>
<dbReference type="Pfam" id="PF16123">
    <property type="entry name" value="HAGH_C"/>
    <property type="match status" value="1"/>
</dbReference>
<dbReference type="Pfam" id="PF00753">
    <property type="entry name" value="Lactamase_B"/>
    <property type="match status" value="1"/>
</dbReference>
<dbReference type="PIRSF" id="PIRSF005457">
    <property type="entry name" value="Glx"/>
    <property type="match status" value="1"/>
</dbReference>
<dbReference type="SMART" id="SM00849">
    <property type="entry name" value="Lactamase_B"/>
    <property type="match status" value="1"/>
</dbReference>
<dbReference type="SUPFAM" id="SSF56281">
    <property type="entry name" value="Metallo-hydrolase/oxidoreductase"/>
    <property type="match status" value="1"/>
</dbReference>
<keyword id="KW-0378">Hydrolase</keyword>
<keyword id="KW-0479">Metal-binding</keyword>
<keyword id="KW-0862">Zinc</keyword>
<sequence length="260" mass="29140">MHRMEQRLEIEQFICRSDNYGVLIHDPESALTATIDAPDAYAIEAALERRGWTLDFIFTTHHHLDHVEGNEPLKEKFGVSIIGPEAEKAKIPGIDRTVKGGDEFTFGLFKVKVISTPGHTAGGISYYLPDAKVVFTGDTLFALGCGRLFEGTPATMFHSLEKLVALPGDTALYCGHEYTQNNARFALTIDPDNSALKERAKEIARLRAHERMTLPSTIALEMATNPFLRWHDRTIRARLGLQDAPDEAVFAEIRKRKDMF</sequence>